<organism>
    <name type="scientific">Burkholderia thailandensis (strain ATCC 700388 / DSM 13276 / CCUG 48851 / CIP 106301 / E264)</name>
    <dbReference type="NCBI Taxonomy" id="271848"/>
    <lineage>
        <taxon>Bacteria</taxon>
        <taxon>Pseudomonadati</taxon>
        <taxon>Pseudomonadota</taxon>
        <taxon>Betaproteobacteria</taxon>
        <taxon>Burkholderiales</taxon>
        <taxon>Burkholderiaceae</taxon>
        <taxon>Burkholderia</taxon>
        <taxon>pseudomallei group</taxon>
    </lineage>
</organism>
<comment type="function">
    <text evidence="1">Catalyzes the conversion of acetate into acetyl-CoA (AcCoA), an essential intermediate at the junction of anabolic and catabolic pathways. AcsA undergoes a two-step reaction. In the first half reaction, AcsA combines acetate with ATP to form acetyl-adenylate (AcAMP) intermediate. In the second half reaction, it can then transfer the acetyl group from AcAMP to the sulfhydryl group of CoA, forming the product AcCoA.</text>
</comment>
<comment type="catalytic activity">
    <reaction evidence="1">
        <text>acetate + ATP + CoA = acetyl-CoA + AMP + diphosphate</text>
        <dbReference type="Rhea" id="RHEA:23176"/>
        <dbReference type="ChEBI" id="CHEBI:30089"/>
        <dbReference type="ChEBI" id="CHEBI:30616"/>
        <dbReference type="ChEBI" id="CHEBI:33019"/>
        <dbReference type="ChEBI" id="CHEBI:57287"/>
        <dbReference type="ChEBI" id="CHEBI:57288"/>
        <dbReference type="ChEBI" id="CHEBI:456215"/>
        <dbReference type="EC" id="6.2.1.1"/>
    </reaction>
</comment>
<comment type="cofactor">
    <cofactor evidence="1">
        <name>Mg(2+)</name>
        <dbReference type="ChEBI" id="CHEBI:18420"/>
    </cofactor>
</comment>
<comment type="PTM">
    <text evidence="1">Acetylated. Deacetylation by the SIR2-homolog deacetylase activates the enzyme.</text>
</comment>
<comment type="similarity">
    <text evidence="1">Belongs to the ATP-dependent AMP-binding enzyme family.</text>
</comment>
<evidence type="ECO:0000255" key="1">
    <source>
        <dbReference type="HAMAP-Rule" id="MF_01123"/>
    </source>
</evidence>
<dbReference type="EC" id="6.2.1.1" evidence="1"/>
<dbReference type="EMBL" id="CP000085">
    <property type="protein sequence ID" value="ABC35414.1"/>
    <property type="molecule type" value="Genomic_DNA"/>
</dbReference>
<dbReference type="SMR" id="Q2T3N9"/>
<dbReference type="GeneID" id="45119432"/>
<dbReference type="KEGG" id="bte:BTH_II2017"/>
<dbReference type="HOGENOM" id="CLU_000022_3_6_4"/>
<dbReference type="Proteomes" id="UP000001930">
    <property type="component" value="Chromosome II"/>
</dbReference>
<dbReference type="GO" id="GO:0005829">
    <property type="term" value="C:cytosol"/>
    <property type="evidence" value="ECO:0007669"/>
    <property type="project" value="TreeGrafter"/>
</dbReference>
<dbReference type="GO" id="GO:0003987">
    <property type="term" value="F:acetate-CoA ligase activity"/>
    <property type="evidence" value="ECO:0007669"/>
    <property type="project" value="UniProtKB-UniRule"/>
</dbReference>
<dbReference type="GO" id="GO:0016208">
    <property type="term" value="F:AMP binding"/>
    <property type="evidence" value="ECO:0007669"/>
    <property type="project" value="InterPro"/>
</dbReference>
<dbReference type="GO" id="GO:0005524">
    <property type="term" value="F:ATP binding"/>
    <property type="evidence" value="ECO:0007669"/>
    <property type="project" value="UniProtKB-KW"/>
</dbReference>
<dbReference type="GO" id="GO:0046872">
    <property type="term" value="F:metal ion binding"/>
    <property type="evidence" value="ECO:0007669"/>
    <property type="project" value="UniProtKB-KW"/>
</dbReference>
<dbReference type="GO" id="GO:0019427">
    <property type="term" value="P:acetyl-CoA biosynthetic process from acetate"/>
    <property type="evidence" value="ECO:0007669"/>
    <property type="project" value="InterPro"/>
</dbReference>
<dbReference type="CDD" id="cd05966">
    <property type="entry name" value="ACS"/>
    <property type="match status" value="1"/>
</dbReference>
<dbReference type="FunFam" id="3.40.50.12780:FF:000001">
    <property type="entry name" value="Acetyl-coenzyme A synthetase"/>
    <property type="match status" value="1"/>
</dbReference>
<dbReference type="Gene3D" id="3.30.300.30">
    <property type="match status" value="1"/>
</dbReference>
<dbReference type="Gene3D" id="3.40.50.12780">
    <property type="entry name" value="N-terminal domain of ligase-like"/>
    <property type="match status" value="1"/>
</dbReference>
<dbReference type="HAMAP" id="MF_01123">
    <property type="entry name" value="Ac_CoA_synth"/>
    <property type="match status" value="1"/>
</dbReference>
<dbReference type="InterPro" id="IPR011904">
    <property type="entry name" value="Ac_CoA_lig"/>
</dbReference>
<dbReference type="InterPro" id="IPR032387">
    <property type="entry name" value="ACAS_N"/>
</dbReference>
<dbReference type="InterPro" id="IPR025110">
    <property type="entry name" value="AMP-bd_C"/>
</dbReference>
<dbReference type="InterPro" id="IPR045851">
    <property type="entry name" value="AMP-bd_C_sf"/>
</dbReference>
<dbReference type="InterPro" id="IPR020845">
    <property type="entry name" value="AMP-binding_CS"/>
</dbReference>
<dbReference type="InterPro" id="IPR000873">
    <property type="entry name" value="AMP-dep_synth/lig_dom"/>
</dbReference>
<dbReference type="InterPro" id="IPR042099">
    <property type="entry name" value="ANL_N_sf"/>
</dbReference>
<dbReference type="NCBIfam" id="TIGR02188">
    <property type="entry name" value="Ac_CoA_lig_AcsA"/>
    <property type="match status" value="1"/>
</dbReference>
<dbReference type="NCBIfam" id="NF001208">
    <property type="entry name" value="PRK00174.1"/>
    <property type="match status" value="1"/>
</dbReference>
<dbReference type="PANTHER" id="PTHR24095">
    <property type="entry name" value="ACETYL-COENZYME A SYNTHETASE"/>
    <property type="match status" value="1"/>
</dbReference>
<dbReference type="PANTHER" id="PTHR24095:SF14">
    <property type="entry name" value="ACETYL-COENZYME A SYNTHETASE 1"/>
    <property type="match status" value="1"/>
</dbReference>
<dbReference type="Pfam" id="PF16177">
    <property type="entry name" value="ACAS_N"/>
    <property type="match status" value="1"/>
</dbReference>
<dbReference type="Pfam" id="PF00501">
    <property type="entry name" value="AMP-binding"/>
    <property type="match status" value="1"/>
</dbReference>
<dbReference type="Pfam" id="PF13193">
    <property type="entry name" value="AMP-binding_C"/>
    <property type="match status" value="1"/>
</dbReference>
<dbReference type="SUPFAM" id="SSF56801">
    <property type="entry name" value="Acetyl-CoA synthetase-like"/>
    <property type="match status" value="1"/>
</dbReference>
<dbReference type="PROSITE" id="PS00455">
    <property type="entry name" value="AMP_BINDING"/>
    <property type="match status" value="1"/>
</dbReference>
<keyword id="KW-0007">Acetylation</keyword>
<keyword id="KW-0067">ATP-binding</keyword>
<keyword id="KW-0436">Ligase</keyword>
<keyword id="KW-0460">Magnesium</keyword>
<keyword id="KW-0479">Metal-binding</keyword>
<keyword id="KW-0547">Nucleotide-binding</keyword>
<proteinExistence type="inferred from homology"/>
<reference key="1">
    <citation type="journal article" date="2005" name="BMC Genomics">
        <title>Bacterial genome adaptation to niches: divergence of the potential virulence genes in three Burkholderia species of different survival strategies.</title>
        <authorList>
            <person name="Kim H.S."/>
            <person name="Schell M.A."/>
            <person name="Yu Y."/>
            <person name="Ulrich R.L."/>
            <person name="Sarria S.H."/>
            <person name="Nierman W.C."/>
            <person name="DeShazer D."/>
        </authorList>
    </citation>
    <scope>NUCLEOTIDE SEQUENCE [LARGE SCALE GENOMIC DNA]</scope>
    <source>
        <strain>ATCC 700388 / DSM 13276 / CCUG 48851 / CIP 106301 / E264</strain>
    </source>
</reference>
<gene>
    <name evidence="1" type="primary">acsA</name>
    <name type="ordered locus">BTH_II2017</name>
</gene>
<accession>Q2T3N9</accession>
<name>ACSA_BURTA</name>
<feature type="chain" id="PRO_1000065286" description="Acetyl-coenzyme A synthetase">
    <location>
        <begin position="1"/>
        <end position="660"/>
    </location>
</feature>
<feature type="binding site" evidence="1">
    <location>
        <begin position="197"/>
        <end position="200"/>
    </location>
    <ligand>
        <name>CoA</name>
        <dbReference type="ChEBI" id="CHEBI:57287"/>
    </ligand>
</feature>
<feature type="binding site" evidence="1">
    <location>
        <position position="317"/>
    </location>
    <ligand>
        <name>CoA</name>
        <dbReference type="ChEBI" id="CHEBI:57287"/>
    </ligand>
</feature>
<feature type="binding site" evidence="1">
    <location>
        <begin position="397"/>
        <end position="399"/>
    </location>
    <ligand>
        <name>ATP</name>
        <dbReference type="ChEBI" id="CHEBI:30616"/>
    </ligand>
</feature>
<feature type="binding site" evidence="1">
    <location>
        <begin position="421"/>
        <end position="426"/>
    </location>
    <ligand>
        <name>ATP</name>
        <dbReference type="ChEBI" id="CHEBI:30616"/>
    </ligand>
</feature>
<feature type="binding site" evidence="1">
    <location>
        <position position="512"/>
    </location>
    <ligand>
        <name>ATP</name>
        <dbReference type="ChEBI" id="CHEBI:30616"/>
    </ligand>
</feature>
<feature type="binding site" evidence="1">
    <location>
        <position position="528"/>
    </location>
    <ligand>
        <name>ATP</name>
        <dbReference type="ChEBI" id="CHEBI:30616"/>
    </ligand>
</feature>
<feature type="binding site" evidence="1">
    <location>
        <position position="536"/>
    </location>
    <ligand>
        <name>CoA</name>
        <dbReference type="ChEBI" id="CHEBI:57287"/>
    </ligand>
</feature>
<feature type="binding site" evidence="1">
    <location>
        <position position="539"/>
    </location>
    <ligand>
        <name>ATP</name>
        <dbReference type="ChEBI" id="CHEBI:30616"/>
    </ligand>
</feature>
<feature type="binding site" evidence="1">
    <location>
        <position position="550"/>
    </location>
    <ligand>
        <name>Mg(2+)</name>
        <dbReference type="ChEBI" id="CHEBI:18420"/>
    </ligand>
</feature>
<feature type="binding site" evidence="1">
    <location>
        <position position="552"/>
    </location>
    <ligand>
        <name>Mg(2+)</name>
        <dbReference type="ChEBI" id="CHEBI:18420"/>
    </ligand>
</feature>
<feature type="binding site" evidence="1">
    <location>
        <position position="555"/>
    </location>
    <ligand>
        <name>Mg(2+)</name>
        <dbReference type="ChEBI" id="CHEBI:18420"/>
    </ligand>
</feature>
<feature type="modified residue" description="N6-acetyllysine" evidence="1">
    <location>
        <position position="625"/>
    </location>
</feature>
<protein>
    <recommendedName>
        <fullName evidence="1">Acetyl-coenzyme A synthetase</fullName>
        <shortName evidence="1">AcCoA synthetase</shortName>
        <shortName evidence="1">Acs</shortName>
        <ecNumber evidence="1">6.2.1.1</ecNumber>
    </recommendedName>
    <alternativeName>
        <fullName evidence="1">Acetate--CoA ligase</fullName>
    </alternativeName>
    <alternativeName>
        <fullName evidence="1">Acyl-activating enzyme</fullName>
    </alternativeName>
</protein>
<sequence>MSAIESVLHERRQFAPPAAVEKAAAISGMAAYRALAEEAERDYEGFWARLARETLEWRKPFGKALDETNAPFYKWFDDGELNASYNCLDRHVAAGLGERIAVIFEADDGTVARVTYADLLARVSRFANALKKRGIGRGDRVVIYIPMSVEGIVAMQACARIGATHSVVFGGFSSKSLHERIVDVGATALVTADEQMRGGKTLPLKSIADEALAMGGCDAVKTVVVYRRTGGNVDWHAGRDVWMHEIVANESDACEPEWVGAEHPLFILYTSGSTGKPKGVQHSTAGYLLWVAQTMKWTFDWKPDDVFWCTADIGWVTGHSYITYGPLAVGATQVVFEGVPTYPNAGRFWKMIGDHKVSVFYTAPTAIRSLIKAAEADEHVHPKSYDLSSLRIIGTVGEPINPEAWIWYHKNVGQERCPIVDTWWQTETGGHMITPLPGATPTVPGSCTLPLPGIMAAVVDETGQDVPNGQGGILVVKRPWPAMARTIWGDPERFKKSYFPDELGGRLYLAGDGTVRDKETGYFTIMGRIDDVLNVSGHRLGTMEIESALVSHELVAEAAVVGRPDDTTGEAVVAFVVLKRSRPEGEEAAALAKTLRDWVGKEIGPIAKPKDIRFGDNLPKTRSGKIMRRLLRSLAKGEAITQDTSTLENPAILEQLAEVR</sequence>